<keyword id="KW-1185">Reference proteome</keyword>
<keyword id="KW-0687">Ribonucleoprotein</keyword>
<keyword id="KW-0689">Ribosomal protein</keyword>
<comment type="similarity">
    <text evidence="1">Belongs to the universal ribosomal protein uL16 family.</text>
</comment>
<accession>Q2NHZ0</accession>
<name>RL10E_METST</name>
<proteinExistence type="inferred from homology"/>
<dbReference type="EMBL" id="CP000102">
    <property type="protein sequence ID" value="ABC56737.1"/>
    <property type="molecule type" value="Genomic_DNA"/>
</dbReference>
<dbReference type="SMR" id="Q2NHZ0"/>
<dbReference type="STRING" id="339860.Msp_0327"/>
<dbReference type="KEGG" id="mst:Msp_0327"/>
<dbReference type="eggNOG" id="arCOG04113">
    <property type="taxonomic scope" value="Archaea"/>
</dbReference>
<dbReference type="HOGENOM" id="CLU_084051_0_2_2"/>
<dbReference type="OrthoDB" id="30538at2157"/>
<dbReference type="Proteomes" id="UP000001931">
    <property type="component" value="Chromosome"/>
</dbReference>
<dbReference type="GO" id="GO:1990904">
    <property type="term" value="C:ribonucleoprotein complex"/>
    <property type="evidence" value="ECO:0007669"/>
    <property type="project" value="UniProtKB-KW"/>
</dbReference>
<dbReference type="GO" id="GO:0005840">
    <property type="term" value="C:ribosome"/>
    <property type="evidence" value="ECO:0007669"/>
    <property type="project" value="UniProtKB-KW"/>
</dbReference>
<dbReference type="GO" id="GO:0003735">
    <property type="term" value="F:structural constituent of ribosome"/>
    <property type="evidence" value="ECO:0007669"/>
    <property type="project" value="InterPro"/>
</dbReference>
<dbReference type="GO" id="GO:0006412">
    <property type="term" value="P:translation"/>
    <property type="evidence" value="ECO:0007669"/>
    <property type="project" value="UniProtKB-UniRule"/>
</dbReference>
<dbReference type="CDD" id="cd01433">
    <property type="entry name" value="Ribosomal_L16_L10e"/>
    <property type="match status" value="1"/>
</dbReference>
<dbReference type="Gene3D" id="3.90.1170.10">
    <property type="entry name" value="Ribosomal protein L10e/L16"/>
    <property type="match status" value="1"/>
</dbReference>
<dbReference type="HAMAP" id="MF_00448">
    <property type="entry name" value="Ribosomal_uL16_arch"/>
    <property type="match status" value="1"/>
</dbReference>
<dbReference type="InterPro" id="IPR047873">
    <property type="entry name" value="Ribosomal_uL16"/>
</dbReference>
<dbReference type="InterPro" id="IPR022981">
    <property type="entry name" value="Ribosomal_uL16_arc"/>
</dbReference>
<dbReference type="InterPro" id="IPR018255">
    <property type="entry name" value="Ribosomal_uL16_CS_euk_arc"/>
</dbReference>
<dbReference type="InterPro" id="IPR016180">
    <property type="entry name" value="Ribosomal_uL16_dom"/>
</dbReference>
<dbReference type="InterPro" id="IPR001197">
    <property type="entry name" value="Ribosomal_uL16_euk_arch"/>
</dbReference>
<dbReference type="InterPro" id="IPR036920">
    <property type="entry name" value="Ribosomal_uL16_sf"/>
</dbReference>
<dbReference type="NCBIfam" id="NF003239">
    <property type="entry name" value="PRK04199.1-4"/>
    <property type="match status" value="1"/>
</dbReference>
<dbReference type="NCBIfam" id="TIGR00279">
    <property type="entry name" value="uL16_euk_arch"/>
    <property type="match status" value="1"/>
</dbReference>
<dbReference type="PANTHER" id="PTHR11726">
    <property type="entry name" value="60S RIBOSOMAL PROTEIN L10"/>
    <property type="match status" value="1"/>
</dbReference>
<dbReference type="Pfam" id="PF00252">
    <property type="entry name" value="Ribosomal_L16"/>
    <property type="match status" value="1"/>
</dbReference>
<dbReference type="PIRSF" id="PIRSF005590">
    <property type="entry name" value="Ribosomal_L10"/>
    <property type="match status" value="1"/>
</dbReference>
<dbReference type="SUPFAM" id="SSF54686">
    <property type="entry name" value="Ribosomal protein L16p/L10e"/>
    <property type="match status" value="1"/>
</dbReference>
<dbReference type="PROSITE" id="PS01257">
    <property type="entry name" value="RIBOSOMAL_L10E"/>
    <property type="match status" value="1"/>
</dbReference>
<sequence>MVRPYTRKDYIRKIPASKIVQYDMGNLSGEFPLEVTLAVKEHTHLSHNSLEAARIAANRYLQRTTGKLGYRLKIRTYPHHIVRENPMATGAGADRVQSGMRGAFGKAVSSEALVRANQKIITAYVQVKDFEKAKVALNRAAMKLPVTCKLVIDKGHDLVQF</sequence>
<organism>
    <name type="scientific">Methanosphaera stadtmanae (strain ATCC 43021 / DSM 3091 / JCM 11832 / MCB-3)</name>
    <dbReference type="NCBI Taxonomy" id="339860"/>
    <lineage>
        <taxon>Archaea</taxon>
        <taxon>Methanobacteriati</taxon>
        <taxon>Methanobacteriota</taxon>
        <taxon>Methanomada group</taxon>
        <taxon>Methanobacteria</taxon>
        <taxon>Methanobacteriales</taxon>
        <taxon>Methanobacteriaceae</taxon>
        <taxon>Methanosphaera</taxon>
    </lineage>
</organism>
<feature type="chain" id="PRO_1000026192" description="Large ribosomal subunit protein uL16">
    <location>
        <begin position="1"/>
        <end position="161"/>
    </location>
</feature>
<protein>
    <recommendedName>
        <fullName evidence="1">Large ribosomal subunit protein uL16</fullName>
    </recommendedName>
    <alternativeName>
        <fullName evidence="2">50S ribosomal protein L10e</fullName>
    </alternativeName>
</protein>
<evidence type="ECO:0000255" key="1">
    <source>
        <dbReference type="HAMAP-Rule" id="MF_00448"/>
    </source>
</evidence>
<evidence type="ECO:0000305" key="2"/>
<reference key="1">
    <citation type="journal article" date="2006" name="J. Bacteriol.">
        <title>The genome sequence of Methanosphaera stadtmanae reveals why this human intestinal archaeon is restricted to methanol and H2 for methane formation and ATP synthesis.</title>
        <authorList>
            <person name="Fricke W.F."/>
            <person name="Seedorf H."/>
            <person name="Henne A."/>
            <person name="Kruer M."/>
            <person name="Liesegang H."/>
            <person name="Hedderich R."/>
            <person name="Gottschalk G."/>
            <person name="Thauer R.K."/>
        </authorList>
    </citation>
    <scope>NUCLEOTIDE SEQUENCE [LARGE SCALE GENOMIC DNA]</scope>
    <source>
        <strain>ATCC 43021 / DSM 3091 / JCM 11832 / MCB-3</strain>
    </source>
</reference>
<gene>
    <name evidence="1" type="primary">rpl10e</name>
    <name type="ordered locus">Msp_0327</name>
</gene>